<evidence type="ECO:0000305" key="1"/>
<sequence length="137" mass="14644">MFKTILLAYDGSDHAKRAAAVAKAEAQAHGARLLVVHAYEPVPDYLGEPFFEEALKRRLERAEKVRAEAMALTGVPREDALLLQGRPAEAILQAAIGEKADLIVMGTRGLGAVGSLFLGSQSQKVVAEAPCPVLLVR</sequence>
<name>YQA3_THEAQ</name>
<feature type="chain" id="PRO_0000147444" description="Universal stress protein in QAH/OAS sulfhydrylase 3'region">
    <location>
        <begin position="1"/>
        <end position="137"/>
    </location>
</feature>
<accession>P74897</accession>
<comment type="similarity">
    <text evidence="1">Belongs to the universal stress protein A family.</text>
</comment>
<proteinExistence type="inferred from homology"/>
<protein>
    <recommendedName>
        <fullName>Universal stress protein in QAH/OAS sulfhydrylase 3'region</fullName>
        <shortName>USP</shortName>
    </recommendedName>
</protein>
<reference key="1">
    <citation type="submission" date="1996-08" db="EMBL/GenBank/DDBJ databases">
        <authorList>
            <person name="Motoshima H."/>
        </authorList>
    </citation>
    <scope>NUCLEOTIDE SEQUENCE [GENOMIC DNA]</scope>
    <source>
        <strain>ATCC 25104 / DSM 625 / JCM 10724 / NBRC 103206 / NCIMB 11243 / YT-1</strain>
    </source>
</reference>
<dbReference type="EMBL" id="D87664">
    <property type="protein sequence ID" value="BAA13428.1"/>
    <property type="molecule type" value="Genomic_DNA"/>
</dbReference>
<dbReference type="RefSeq" id="WP_053768121.1">
    <property type="nucleotide sequence ID" value="NZ_LHCI01000106.1"/>
</dbReference>
<dbReference type="SMR" id="P74897"/>
<dbReference type="CDD" id="cd00293">
    <property type="entry name" value="USP-like"/>
    <property type="match status" value="1"/>
</dbReference>
<dbReference type="Gene3D" id="3.40.50.620">
    <property type="entry name" value="HUPs"/>
    <property type="match status" value="1"/>
</dbReference>
<dbReference type="InterPro" id="IPR014729">
    <property type="entry name" value="Rossmann-like_a/b/a_fold"/>
</dbReference>
<dbReference type="InterPro" id="IPR006015">
    <property type="entry name" value="Universal_stress_UspA"/>
</dbReference>
<dbReference type="InterPro" id="IPR006016">
    <property type="entry name" value="UspA"/>
</dbReference>
<dbReference type="PANTHER" id="PTHR46268">
    <property type="entry name" value="STRESS RESPONSE PROTEIN NHAX"/>
    <property type="match status" value="1"/>
</dbReference>
<dbReference type="PANTHER" id="PTHR46268:SF6">
    <property type="entry name" value="UNIVERSAL STRESS PROTEIN UP12"/>
    <property type="match status" value="1"/>
</dbReference>
<dbReference type="Pfam" id="PF00582">
    <property type="entry name" value="Usp"/>
    <property type="match status" value="1"/>
</dbReference>
<dbReference type="PRINTS" id="PR01438">
    <property type="entry name" value="UNVRSLSTRESS"/>
</dbReference>
<dbReference type="SUPFAM" id="SSF52402">
    <property type="entry name" value="Adenine nucleotide alpha hydrolases-like"/>
    <property type="match status" value="1"/>
</dbReference>
<organism>
    <name type="scientific">Thermus aquaticus</name>
    <dbReference type="NCBI Taxonomy" id="271"/>
    <lineage>
        <taxon>Bacteria</taxon>
        <taxon>Thermotogati</taxon>
        <taxon>Deinococcota</taxon>
        <taxon>Deinococci</taxon>
        <taxon>Thermales</taxon>
        <taxon>Thermaceae</taxon>
        <taxon>Thermus</taxon>
    </lineage>
</organism>